<keyword id="KW-0025">Alternative splicing</keyword>
<keyword id="KW-0175">Coiled coil</keyword>
<keyword id="KW-0469">Meiosis</keyword>
<keyword id="KW-1185">Reference proteome</keyword>
<evidence type="ECO:0000255" key="1"/>
<evidence type="ECO:0000303" key="2">
    <source>
    </source>
</evidence>
<feature type="chain" id="PRO_0000096451" description="Meiotic expression up-regulated protein 1/2">
    <location>
        <begin position="1"/>
        <end position="776"/>
    </location>
</feature>
<feature type="coiled-coil region" evidence="1">
    <location>
        <begin position="87"/>
        <end position="122"/>
    </location>
</feature>
<feature type="coiled-coil region" evidence="1">
    <location>
        <begin position="173"/>
        <end position="227"/>
    </location>
</feature>
<feature type="coiled-coil region" evidence="1">
    <location>
        <begin position="265"/>
        <end position="307"/>
    </location>
</feature>
<feature type="coiled-coil region" evidence="1">
    <location>
        <begin position="362"/>
        <end position="430"/>
    </location>
</feature>
<feature type="coiled-coil region" evidence="1">
    <location>
        <begin position="496"/>
        <end position="595"/>
    </location>
</feature>
<feature type="splice variant" id="VSP_011423" description="In isoform meu1-2." evidence="2">
    <location>
        <begin position="1"/>
        <end position="677"/>
    </location>
</feature>
<accession>Q9UTJ3</accession>
<accession>A6X975</accession>
<accession>A6X976</accession>
<accession>Q9HFC0</accession>
<dbReference type="EMBL" id="AB017033">
    <property type="protein sequence ID" value="BAB20279.1"/>
    <property type="molecule type" value="mRNA"/>
</dbReference>
<dbReference type="EMBL" id="AB017034">
    <property type="protein sequence ID" value="BAB20280.1"/>
    <property type="molecule type" value="mRNA"/>
</dbReference>
<dbReference type="EMBL" id="CU329670">
    <property type="protein sequence ID" value="CAO77643.1"/>
    <property type="molecule type" value="Genomic_DNA"/>
</dbReference>
<dbReference type="EMBL" id="CU329670">
    <property type="protein sequence ID" value="CAO77644.1"/>
    <property type="molecule type" value="Genomic_DNA"/>
</dbReference>
<dbReference type="PIR" id="T50085">
    <property type="entry name" value="T50085"/>
</dbReference>
<dbReference type="RefSeq" id="XP_001713091.1">
    <property type="nucleotide sequence ID" value="XM_001713039.1"/>
</dbReference>
<dbReference type="RefSeq" id="XP_001713092.1">
    <property type="nucleotide sequence ID" value="XM_001713040.1"/>
</dbReference>
<dbReference type="SMR" id="Q9UTJ3"/>
<dbReference type="FunCoup" id="Q9UTJ3">
    <property type="interactions" value="141"/>
</dbReference>
<dbReference type="STRING" id="284812.Q9UTJ3"/>
<dbReference type="PaxDb" id="4896-SPAC1556.06.1"/>
<dbReference type="EnsemblFungi" id="SPAC1556.06.1">
    <molecule id="Q9UTJ3-1"/>
    <property type="protein sequence ID" value="SPAC1556.06.1:pep"/>
    <property type="gene ID" value="SPAC1556.06"/>
</dbReference>
<dbReference type="EnsemblFungi" id="SPAC1556.06.2">
    <molecule id="Q9UTJ3-2"/>
    <property type="protein sequence ID" value="SPAC1556.06.2:pep"/>
    <property type="gene ID" value="SPAC1556.06"/>
</dbReference>
<dbReference type="PomBase" id="SPAC1556.06">
    <property type="gene designation" value="meu1"/>
</dbReference>
<dbReference type="VEuPathDB" id="FungiDB:SPAC1556.06"/>
<dbReference type="HOGENOM" id="CLU_348219_0_0_1"/>
<dbReference type="InParanoid" id="Q9UTJ3"/>
<dbReference type="OMA" id="ECKLICS"/>
<dbReference type="PRO" id="PR:Q9UTJ3"/>
<dbReference type="Proteomes" id="UP000002485">
    <property type="component" value="Chromosome I"/>
</dbReference>
<dbReference type="GO" id="GO:0051321">
    <property type="term" value="P:meiotic cell cycle"/>
    <property type="evidence" value="ECO:0007669"/>
    <property type="project" value="UniProtKB-KW"/>
</dbReference>
<gene>
    <name type="primary">meu1</name>
    <name type="synonym">meu2</name>
    <name type="ORF">SPAC1556.06</name>
</gene>
<name>MEU1_SCHPO</name>
<organism>
    <name type="scientific">Schizosaccharomyces pombe (strain 972 / ATCC 24843)</name>
    <name type="common">Fission yeast</name>
    <dbReference type="NCBI Taxonomy" id="284812"/>
    <lineage>
        <taxon>Eukaryota</taxon>
        <taxon>Fungi</taxon>
        <taxon>Dikarya</taxon>
        <taxon>Ascomycota</taxon>
        <taxon>Taphrinomycotina</taxon>
        <taxon>Schizosaccharomycetes</taxon>
        <taxon>Schizosaccharomycetales</taxon>
        <taxon>Schizosaccharomycetaceae</taxon>
        <taxon>Schizosaccharomyces</taxon>
    </lineage>
</organism>
<comment type="alternative products">
    <event type="alternative splicing"/>
    <isoform>
        <id>Q9UTJ3-1</id>
        <name>meu1-1</name>
        <name>meu1</name>
        <name>SPAC1556.06.1</name>
        <name>SPAC1556.06a</name>
        <sequence type="displayed"/>
    </isoform>
    <isoform>
        <id>Q9UTJ3-2</id>
        <name>meu1-2</name>
        <name>meu2</name>
        <name>SPAC1556.06.2</name>
        <name>SPAC1556.06b</name>
        <sequence type="described" ref="VSP_011423"/>
    </isoform>
</comment>
<reference key="1">
    <citation type="journal article" date="2001" name="Nucleic Acids Res.">
        <title>Comprehensive isolation of meiosis-specific genes identifies novel proteins and unusual non-coding transcripts in Schizosaccharomyces pombe.</title>
        <authorList>
            <person name="Watanabe T."/>
            <person name="Miyashita K."/>
            <person name="Saito T.T."/>
            <person name="Yoneki T."/>
            <person name="Kakihara Y."/>
            <person name="Nabeshima K."/>
            <person name="Kishi Y.A."/>
            <person name="Shimoda C."/>
            <person name="Nojima H."/>
        </authorList>
    </citation>
    <scope>NUCLEOTIDE SEQUENCE [MRNA] (ISOFORMS MEU1-1 AND MEU1-2)</scope>
</reference>
<reference key="2">
    <citation type="journal article" date="2002" name="Nature">
        <title>The genome sequence of Schizosaccharomyces pombe.</title>
        <authorList>
            <person name="Wood V."/>
            <person name="Gwilliam R."/>
            <person name="Rajandream M.A."/>
            <person name="Lyne M.H."/>
            <person name="Lyne R."/>
            <person name="Stewart A."/>
            <person name="Sgouros J.G."/>
            <person name="Peat N."/>
            <person name="Hayles J."/>
            <person name="Baker S.G."/>
            <person name="Basham D."/>
            <person name="Bowman S."/>
            <person name="Brooks K."/>
            <person name="Brown D."/>
            <person name="Brown S."/>
            <person name="Chillingworth T."/>
            <person name="Churcher C.M."/>
            <person name="Collins M."/>
            <person name="Connor R."/>
            <person name="Cronin A."/>
            <person name="Davis P."/>
            <person name="Feltwell T."/>
            <person name="Fraser A."/>
            <person name="Gentles S."/>
            <person name="Goble A."/>
            <person name="Hamlin N."/>
            <person name="Harris D.E."/>
            <person name="Hidalgo J."/>
            <person name="Hodgson G."/>
            <person name="Holroyd S."/>
            <person name="Hornsby T."/>
            <person name="Howarth S."/>
            <person name="Huckle E.J."/>
            <person name="Hunt S."/>
            <person name="Jagels K."/>
            <person name="James K.D."/>
            <person name="Jones L."/>
            <person name="Jones M."/>
            <person name="Leather S."/>
            <person name="McDonald S."/>
            <person name="McLean J."/>
            <person name="Mooney P."/>
            <person name="Moule S."/>
            <person name="Mungall K.L."/>
            <person name="Murphy L.D."/>
            <person name="Niblett D."/>
            <person name="Odell C."/>
            <person name="Oliver K."/>
            <person name="O'Neil S."/>
            <person name="Pearson D."/>
            <person name="Quail M.A."/>
            <person name="Rabbinowitsch E."/>
            <person name="Rutherford K.M."/>
            <person name="Rutter S."/>
            <person name="Saunders D."/>
            <person name="Seeger K."/>
            <person name="Sharp S."/>
            <person name="Skelton J."/>
            <person name="Simmonds M.N."/>
            <person name="Squares R."/>
            <person name="Squares S."/>
            <person name="Stevens K."/>
            <person name="Taylor K."/>
            <person name="Taylor R.G."/>
            <person name="Tivey A."/>
            <person name="Walsh S.V."/>
            <person name="Warren T."/>
            <person name="Whitehead S."/>
            <person name="Woodward J.R."/>
            <person name="Volckaert G."/>
            <person name="Aert R."/>
            <person name="Robben J."/>
            <person name="Grymonprez B."/>
            <person name="Weltjens I."/>
            <person name="Vanstreels E."/>
            <person name="Rieger M."/>
            <person name="Schaefer M."/>
            <person name="Mueller-Auer S."/>
            <person name="Gabel C."/>
            <person name="Fuchs M."/>
            <person name="Duesterhoeft A."/>
            <person name="Fritzc C."/>
            <person name="Holzer E."/>
            <person name="Moestl D."/>
            <person name="Hilbert H."/>
            <person name="Borzym K."/>
            <person name="Langer I."/>
            <person name="Beck A."/>
            <person name="Lehrach H."/>
            <person name="Reinhardt R."/>
            <person name="Pohl T.M."/>
            <person name="Eger P."/>
            <person name="Zimmermann W."/>
            <person name="Wedler H."/>
            <person name="Wambutt R."/>
            <person name="Purnelle B."/>
            <person name="Goffeau A."/>
            <person name="Cadieu E."/>
            <person name="Dreano S."/>
            <person name="Gloux S."/>
            <person name="Lelaure V."/>
            <person name="Mottier S."/>
            <person name="Galibert F."/>
            <person name="Aves S.J."/>
            <person name="Xiang Z."/>
            <person name="Hunt C."/>
            <person name="Moore K."/>
            <person name="Hurst S.M."/>
            <person name="Lucas M."/>
            <person name="Rochet M."/>
            <person name="Gaillardin C."/>
            <person name="Tallada V.A."/>
            <person name="Garzon A."/>
            <person name="Thode G."/>
            <person name="Daga R.R."/>
            <person name="Cruzado L."/>
            <person name="Jimenez J."/>
            <person name="Sanchez M."/>
            <person name="del Rey F."/>
            <person name="Benito J."/>
            <person name="Dominguez A."/>
            <person name="Revuelta J.L."/>
            <person name="Moreno S."/>
            <person name="Armstrong J."/>
            <person name="Forsburg S.L."/>
            <person name="Cerutti L."/>
            <person name="Lowe T."/>
            <person name="McCombie W.R."/>
            <person name="Paulsen I."/>
            <person name="Potashkin J."/>
            <person name="Shpakovski G.V."/>
            <person name="Ussery D."/>
            <person name="Barrell B.G."/>
            <person name="Nurse P."/>
        </authorList>
    </citation>
    <scope>NUCLEOTIDE SEQUENCE [LARGE SCALE GENOMIC DNA]</scope>
    <source>
        <strain>972 / ATCC 24843</strain>
    </source>
</reference>
<proteinExistence type="evidence at transcript level"/>
<sequence>MSIPANVLMEISFQELTSKKSEEYERKRLNEIGDLLTPQKIEEVLNCKDTKQRNVSLEDIFQDFLNFIITKNQEMFSMDCNSICKSYVLKVAEEKIEKLLKENGTLKNEEKCLRMQIVAQEEYVAPLIQKLEIIEKKLDKSFRKNMEDELRITRLASENNVLISRIDRTKRHFSELFTQKQMLQLQNENFKDDYEKIKEENKRLYKERKSFLSKIEKSACEIHDLKESDSFKDHEILRLKEERTAAMQAIDDISGTIETIKSDCYKVESENKGLINEVMDMRNFVQQLEQELYAFEDDYSRIQNDEELLKVGMIHLNKSENRTVEEMKIGDFGNTEEAKDVCVSDEDIHNVNIKQITTLIGKMSQVQIECKRLRKENLFLQSERTHLLRELEELRHLATSAKEDFVKVEKLNKIIKDENENLKEYIRNNSLSFQATAGELTQCKQLPQPRITGNDQENSHYTGAGNNCLELVGKENNCKNQYPQYFSNIDESNAFINNQCLELEALNRKNDLIRGELDSLKEKNLVAQKQLKSANNTLHVRAKHIQILENTNQSLKKNLENGRAEFRLKEIALIDLANQQIKNQDKTIHDLNTELCSLTLDYCNTAVERDTLRFRALEYLDHNKQTNPLPYHIVYMFSFETSPTVFQTSPEEDKENVNNIKISQPRNSLQTNGYIEGMANNVLDASFNVEDESHAISDSELGYFCEDQSNIYEVEDMRYYLFYTEEEKNMLPGFIVNARPANLDLFPCCYETTDKRSKHLKNMLNKKKLIKHIFHL</sequence>
<protein>
    <recommendedName>
        <fullName>Meiotic expression up-regulated protein 1/2</fullName>
    </recommendedName>
</protein>